<keyword id="KW-1185">Reference proteome</keyword>
<name>Y984_CAMJE</name>
<proteinExistence type="predicted"/>
<feature type="chain" id="PRO_0000214876" description="Uncharacterized protein Cj0984">
    <location>
        <begin position="1"/>
        <end position="246"/>
    </location>
</feature>
<feature type="sequence conflict" description="In Ref. 1; CAA85397." evidence="1" ref="1">
    <original>V</original>
    <variation>T</variation>
    <location>
        <position position="16"/>
    </location>
</feature>
<feature type="sequence conflict" description="In Ref. 1; CAA85397." evidence="1" ref="1">
    <original>N</original>
    <variation>D</variation>
    <location>
        <position position="21"/>
    </location>
</feature>
<feature type="sequence conflict" description="In Ref. 1; CAA85397." evidence="1" ref="1">
    <original>E</original>
    <variation>G</variation>
    <location>
        <position position="42"/>
    </location>
</feature>
<feature type="sequence conflict" description="In Ref. 1; CAA85397." evidence="1" ref="1">
    <original>Q</original>
    <variation>K</variation>
    <location>
        <position position="51"/>
    </location>
</feature>
<feature type="sequence conflict" description="In Ref. 1; CAA85397." evidence="1" ref="1">
    <original>I</original>
    <variation>V</variation>
    <location>
        <position position="118"/>
    </location>
</feature>
<feature type="sequence conflict" description="In Ref. 1; CAA85397." evidence="1" ref="1">
    <original>E</original>
    <variation>K</variation>
    <location>
        <position position="160"/>
    </location>
</feature>
<feature type="sequence conflict" description="In Ref. 1; CAA85397." evidence="1" ref="1">
    <original>V</original>
    <variation>I</variation>
    <location>
        <position position="212"/>
    </location>
</feature>
<reference key="1">
    <citation type="journal article" date="1995" name="J. Bacteriol.">
        <title>Expression and characterization of Campylobacter jejuni benzoylglycine amidohydrolase (Hippuricase) gene in Escherichia coli.</title>
        <authorList>
            <person name="Hani E.K."/>
            <person name="Chan V.L."/>
        </authorList>
    </citation>
    <scope>NUCLEOTIDE SEQUENCE [GENOMIC DNA]</scope>
    <source>
        <strain>ATCC 43431 / TGH 9011 / Serotype O:3</strain>
    </source>
</reference>
<reference key="2">
    <citation type="journal article" date="2000" name="Nature">
        <title>The genome sequence of the food-borne pathogen Campylobacter jejuni reveals hypervariable sequences.</title>
        <authorList>
            <person name="Parkhill J."/>
            <person name="Wren B.W."/>
            <person name="Mungall K.L."/>
            <person name="Ketley J.M."/>
            <person name="Churcher C.M."/>
            <person name="Basham D."/>
            <person name="Chillingworth T."/>
            <person name="Davies R.M."/>
            <person name="Feltwell T."/>
            <person name="Holroyd S."/>
            <person name="Jagels K."/>
            <person name="Karlyshev A.V."/>
            <person name="Moule S."/>
            <person name="Pallen M.J."/>
            <person name="Penn C.W."/>
            <person name="Quail M.A."/>
            <person name="Rajandream M.A."/>
            <person name="Rutherford K.M."/>
            <person name="van Vliet A.H.M."/>
            <person name="Whitehead S."/>
            <person name="Barrell B.G."/>
        </authorList>
    </citation>
    <scope>NUCLEOTIDE SEQUENCE [LARGE SCALE GENOMIC DNA]</scope>
    <source>
        <strain>ATCC 700819 / NCTC 11168</strain>
    </source>
</reference>
<sequence>MKILFSPSESKNENCVKNPINENSFIFKELFPYRMEALKHYEEFIKNASLQNLQELFGIKNENEIDKFKHDLKQAPTQEAILLYTGVSYEYLNFKALDKKSQAYILENTLIFSNLFGIVRANDTLPFYKFKQGAKIGNFAIEKFYKEHFSKALDEYLENEEILDLRAGFYDKFYTPKKKFYTYKFVKNGKVISHFAKAYRGILLSISAKNQVKNNKELLANLPSNLKLKEIQIKGLKEEIVLEILD</sequence>
<evidence type="ECO:0000305" key="1"/>
<accession>P45491</accession>
<accession>Q0P9R8</accession>
<accession>Q9PNV5</accession>
<dbReference type="EMBL" id="Z36940">
    <property type="protein sequence ID" value="CAA85397.1"/>
    <property type="molecule type" value="Genomic_DNA"/>
</dbReference>
<dbReference type="EMBL" id="AL111168">
    <property type="protein sequence ID" value="CAL35102.1"/>
    <property type="molecule type" value="Genomic_DNA"/>
</dbReference>
<dbReference type="PIR" id="E81373">
    <property type="entry name" value="E81373"/>
</dbReference>
<dbReference type="PIR" id="I40763">
    <property type="entry name" value="I40763"/>
</dbReference>
<dbReference type="RefSeq" id="WP_002853346.1">
    <property type="nucleotide sequence ID" value="NZ_SZUC01000001.1"/>
</dbReference>
<dbReference type="RefSeq" id="YP_002344379.1">
    <property type="nucleotide sequence ID" value="NC_002163.1"/>
</dbReference>
<dbReference type="SMR" id="P45491"/>
<dbReference type="IntAct" id="P45491">
    <property type="interactions" value="2"/>
</dbReference>
<dbReference type="STRING" id="192222.Cj0984"/>
<dbReference type="PaxDb" id="192222-Cj0984"/>
<dbReference type="EnsemblBacteria" id="CAL35102">
    <property type="protein sequence ID" value="CAL35102"/>
    <property type="gene ID" value="Cj0984"/>
</dbReference>
<dbReference type="GeneID" id="905275"/>
<dbReference type="KEGG" id="cje:Cj0984"/>
<dbReference type="PATRIC" id="fig|192222.6.peg.967"/>
<dbReference type="eggNOG" id="COG3022">
    <property type="taxonomic scope" value="Bacteria"/>
</dbReference>
<dbReference type="HOGENOM" id="CLU_071581_1_0_7"/>
<dbReference type="OrthoDB" id="3210767at2"/>
<dbReference type="Proteomes" id="UP000000799">
    <property type="component" value="Chromosome"/>
</dbReference>
<dbReference type="GO" id="GO:0005829">
    <property type="term" value="C:cytosol"/>
    <property type="evidence" value="ECO:0007669"/>
    <property type="project" value="TreeGrafter"/>
</dbReference>
<dbReference type="GO" id="GO:0033194">
    <property type="term" value="P:response to hydroperoxide"/>
    <property type="evidence" value="ECO:0007669"/>
    <property type="project" value="TreeGrafter"/>
</dbReference>
<dbReference type="InterPro" id="IPR005583">
    <property type="entry name" value="YaaA"/>
</dbReference>
<dbReference type="PANTHER" id="PTHR30283:SF4">
    <property type="entry name" value="PEROXIDE STRESS RESISTANCE PROTEIN YAAA"/>
    <property type="match status" value="1"/>
</dbReference>
<dbReference type="PANTHER" id="PTHR30283">
    <property type="entry name" value="PEROXIDE STRESS RESPONSE PROTEIN YAAA"/>
    <property type="match status" value="1"/>
</dbReference>
<dbReference type="Pfam" id="PF03883">
    <property type="entry name" value="H2O2_YaaD"/>
    <property type="match status" value="1"/>
</dbReference>
<protein>
    <recommendedName>
        <fullName>Uncharacterized protein Cj0984</fullName>
    </recommendedName>
</protein>
<organism>
    <name type="scientific">Campylobacter jejuni subsp. jejuni serotype O:2 (strain ATCC 700819 / NCTC 11168)</name>
    <dbReference type="NCBI Taxonomy" id="192222"/>
    <lineage>
        <taxon>Bacteria</taxon>
        <taxon>Pseudomonadati</taxon>
        <taxon>Campylobacterota</taxon>
        <taxon>Epsilonproteobacteria</taxon>
        <taxon>Campylobacterales</taxon>
        <taxon>Campylobacteraceae</taxon>
        <taxon>Campylobacter</taxon>
    </lineage>
</organism>
<gene>
    <name type="ordered locus">Cj0984</name>
</gene>